<dbReference type="EMBL" id="DP000009">
    <property type="protein sequence ID" value="ABF95911.1"/>
    <property type="molecule type" value="Genomic_DNA"/>
</dbReference>
<dbReference type="EMBL" id="AP008209">
    <property type="protein sequence ID" value="BAF12012.1"/>
    <property type="molecule type" value="Genomic_DNA"/>
</dbReference>
<dbReference type="EMBL" id="AP014959">
    <property type="protein sequence ID" value="BAS84173.1"/>
    <property type="status" value="ALT_INIT"/>
    <property type="molecule type" value="Genomic_DNA"/>
</dbReference>
<dbReference type="SMR" id="Q0DRX6"/>
<dbReference type="FunCoup" id="Q0DRX6">
    <property type="interactions" value="202"/>
</dbReference>
<dbReference type="STRING" id="39947.A0A0P0VY74"/>
<dbReference type="PaxDb" id="39947-A0A0P0VY74"/>
<dbReference type="KEGG" id="dosa:Os03g0347300"/>
<dbReference type="eggNOG" id="ENOG502SC6K">
    <property type="taxonomic scope" value="Eukaryota"/>
</dbReference>
<dbReference type="HOGENOM" id="CLU_014232_0_0_1"/>
<dbReference type="InParanoid" id="Q0DRX6"/>
<dbReference type="Proteomes" id="UP000000763">
    <property type="component" value="Chromosome 3"/>
</dbReference>
<dbReference type="Proteomes" id="UP000059680">
    <property type="component" value="Chromosome 3"/>
</dbReference>
<dbReference type="GO" id="GO:0005634">
    <property type="term" value="C:nucleus"/>
    <property type="evidence" value="ECO:0000314"/>
    <property type="project" value="UniProtKB"/>
</dbReference>
<dbReference type="GO" id="GO:0008270">
    <property type="term" value="F:zinc ion binding"/>
    <property type="evidence" value="ECO:0007669"/>
    <property type="project" value="UniProtKB-KW"/>
</dbReference>
<dbReference type="Gene3D" id="3.30.40.100">
    <property type="match status" value="1"/>
</dbReference>
<dbReference type="InterPro" id="IPR055300">
    <property type="entry name" value="CWZF3/5/7"/>
</dbReference>
<dbReference type="InterPro" id="IPR056406">
    <property type="entry name" value="THD_CWZF3/5/7"/>
</dbReference>
<dbReference type="InterPro" id="IPR011124">
    <property type="entry name" value="Znf_CW"/>
</dbReference>
<dbReference type="PANTHER" id="PTHR46524">
    <property type="entry name" value="CW-TYPE ZINC FINGER"/>
    <property type="match status" value="1"/>
</dbReference>
<dbReference type="PANTHER" id="PTHR46524:SF7">
    <property type="entry name" value="CW-TYPE ZINC FINGER"/>
    <property type="match status" value="1"/>
</dbReference>
<dbReference type="Pfam" id="PF24756">
    <property type="entry name" value="THD_CWZF3-5-7"/>
    <property type="match status" value="1"/>
</dbReference>
<dbReference type="Pfam" id="PF07496">
    <property type="entry name" value="zf-CW"/>
    <property type="match status" value="1"/>
</dbReference>
<dbReference type="PROSITE" id="PS51050">
    <property type="entry name" value="ZF_CW"/>
    <property type="match status" value="1"/>
</dbReference>
<accession>Q0DRX6</accession>
<accession>A0A0P0VY74</accession>
<accession>Q10LI9</accession>
<sequence>MPSNGGIIPGPANAASLPAPVLIEDNWVCCDMCHKWRLLPYGTNTSMLPKKWICSMLDWLPGMNKCDISEDETTNALNALYVTQIPAAGVSSGGPHTAHASVAASSTYNISGQLGQSRKRKNALKDENCYEHDQQAPAKMTLTSNQQAPAKNREVVDSEHYTNDRDPVSTHDLVPQSKSASERHKSKHKSRSSHSDGGDLTEKSKKHSKSKNRRGIDRDEHKTSKKTKKEDRHYFNKDWKNEYDLAGNKVRDETKALSAKAKMSKDSCEQDEFSLRKEKASRFDILEKTKRINDDDVAFHEKMKEHRAGIETLDLSGKKKTVKEWEDNRLSSMDHTSKGGDNENLNERLSKIKKSEARPEEVQDANALFSSAGRRQDNELVADNKFVTCKEGPSELWDNQPPRQVLNLAEPTRRDVACLQSSTVATSSSSKVSSSRRNKNSREAKGSPVESVSSSPLKNSNTDKISKARKTGKDGELNADSSILHTPMKYPTHEVGLLHTGQQAVGEAILRGSTNNSGMGRVDNQLYPGDKKILDMHGPTLQPDQQDCFNPRATADSTGHKSKNSAPSRQGRNGSSNLISEGNKQIEMSSRKEKLRPSIDNQDMQKSIGQDNHSHMKEGKSEVHTTRVKPGASKNHTQLRSNVENGDSASPIRRDGNMIAFALKEARDLKHKANHLKEKGLELESMGLYFEAALKFLHVASLWETPNLDNSRSGDVAQSMKMYSETAKLCSFCAHAYERCNKMASAALAYKCVEVAYLKAAYYKHPSASKDRQELQSVVQIAPGESPSSSASDIDNLNSHGLSKALSTKGGNSPQVAGNHLPLAVRNQAHLLRLLAYTNDVNCAFDATRKSQVAIASAASSQERGKTVDDGLASVRTVLDFNFNNVNELLRLVRLSMELINT</sequence>
<name>CWZF3_ORYSJ</name>
<protein>
    <recommendedName>
        <fullName evidence="5">Cysteine-tryptophan domain-containing zinc finger protein 3</fullName>
        <shortName evidence="5">OsCW-ZF3</shortName>
    </recommendedName>
</protein>
<proteinExistence type="evidence at protein level"/>
<comment type="function">
    <text evidence="1 4">Binds to histones H3K4me1, H3K4me2 and H3K4me3 in GST pull-down assay (PubMed:28818372). May facilitate the recruitment of effectors to mediate gene expression (By similarity).</text>
</comment>
<comment type="subcellular location">
    <subcellularLocation>
        <location evidence="4">Nucleus</location>
    </subcellularLocation>
</comment>
<comment type="tissue specificity">
    <text evidence="4">Expressed in leaf sheaths, flag leaves, nodes, internodes and panicles.</text>
</comment>
<comment type="domain">
    <text evidence="4">The CW-type zinc finger domain is not required for nuclear localization.</text>
</comment>
<comment type="sequence caution" evidence="6">
    <conflict type="erroneous initiation">
        <sequence resource="EMBL-CDS" id="BAS84173"/>
    </conflict>
    <text>Extended N-terminus.</text>
</comment>
<keyword id="KW-0479">Metal-binding</keyword>
<keyword id="KW-0539">Nucleus</keyword>
<keyword id="KW-1185">Reference proteome</keyword>
<keyword id="KW-0804">Transcription</keyword>
<keyword id="KW-0805">Transcription regulation</keyword>
<keyword id="KW-0862">Zinc</keyword>
<keyword id="KW-0863">Zinc-finger</keyword>
<evidence type="ECO:0000250" key="1">
    <source>
        <dbReference type="UniProtKB" id="A0A0P0X9Z7"/>
    </source>
</evidence>
<evidence type="ECO:0000255" key="2">
    <source>
        <dbReference type="PROSITE-ProRule" id="PRU00454"/>
    </source>
</evidence>
<evidence type="ECO:0000256" key="3">
    <source>
        <dbReference type="SAM" id="MobiDB-lite"/>
    </source>
</evidence>
<evidence type="ECO:0000269" key="4">
    <source>
    </source>
</evidence>
<evidence type="ECO:0000303" key="5">
    <source>
    </source>
</evidence>
<evidence type="ECO:0000305" key="6"/>
<evidence type="ECO:0000312" key="7">
    <source>
        <dbReference type="EMBL" id="ABF95911.1"/>
    </source>
</evidence>
<evidence type="ECO:0000312" key="8">
    <source>
        <dbReference type="EMBL" id="BAF12012.1"/>
    </source>
</evidence>
<gene>
    <name evidence="5" type="primary">CWZF3</name>
    <name evidence="8" type="ordered locus">Os03g0347300</name>
    <name evidence="7" type="ordered locus">LOC_Os03g22580</name>
</gene>
<reference key="1">
    <citation type="journal article" date="2005" name="Genome Res.">
        <title>Sequence, annotation, and analysis of synteny between rice chromosome 3 and diverged grass species.</title>
        <authorList>
            <consortium name="The rice chromosome 3 sequencing consortium"/>
            <person name="Buell C.R."/>
            <person name="Yuan Q."/>
            <person name="Ouyang S."/>
            <person name="Liu J."/>
            <person name="Zhu W."/>
            <person name="Wang A."/>
            <person name="Maiti R."/>
            <person name="Haas B."/>
            <person name="Wortman J."/>
            <person name="Pertea M."/>
            <person name="Jones K.M."/>
            <person name="Kim M."/>
            <person name="Overton L."/>
            <person name="Tsitrin T."/>
            <person name="Fadrosh D."/>
            <person name="Bera J."/>
            <person name="Weaver B."/>
            <person name="Jin S."/>
            <person name="Johri S."/>
            <person name="Reardon M."/>
            <person name="Webb K."/>
            <person name="Hill J."/>
            <person name="Moffat K."/>
            <person name="Tallon L."/>
            <person name="Van Aken S."/>
            <person name="Lewis M."/>
            <person name="Utterback T."/>
            <person name="Feldblyum T."/>
            <person name="Zismann V."/>
            <person name="Iobst S."/>
            <person name="Hsiao J."/>
            <person name="de Vazeille A.R."/>
            <person name="Salzberg S.L."/>
            <person name="White O."/>
            <person name="Fraser C.M."/>
            <person name="Yu Y."/>
            <person name="Kim H."/>
            <person name="Rambo T."/>
            <person name="Currie J."/>
            <person name="Collura K."/>
            <person name="Kernodle-Thompson S."/>
            <person name="Wei F."/>
            <person name="Kudrna K."/>
            <person name="Ammiraju J.S.S."/>
            <person name="Luo M."/>
            <person name="Goicoechea J.L."/>
            <person name="Wing R.A."/>
            <person name="Henry D."/>
            <person name="Oates R."/>
            <person name="Palmer M."/>
            <person name="Pries G."/>
            <person name="Saski C."/>
            <person name="Simmons J."/>
            <person name="Soderlund C."/>
            <person name="Nelson W."/>
            <person name="de la Bastide M."/>
            <person name="Spiegel L."/>
            <person name="Nascimento L."/>
            <person name="Huang E."/>
            <person name="Preston R."/>
            <person name="Zutavern T."/>
            <person name="Palmer L."/>
            <person name="O'Shaughnessy A."/>
            <person name="Dike S."/>
            <person name="McCombie W.R."/>
            <person name="Minx P."/>
            <person name="Cordum H."/>
            <person name="Wilson R."/>
            <person name="Jin W."/>
            <person name="Lee H.R."/>
            <person name="Jiang J."/>
            <person name="Jackson S."/>
        </authorList>
    </citation>
    <scope>NUCLEOTIDE SEQUENCE [LARGE SCALE GENOMIC DNA]</scope>
    <source>
        <strain>cv. Nipponbare</strain>
    </source>
</reference>
<reference key="2">
    <citation type="journal article" date="2005" name="Nature">
        <title>The map-based sequence of the rice genome.</title>
        <authorList>
            <consortium name="International rice genome sequencing project (IRGSP)"/>
        </authorList>
    </citation>
    <scope>NUCLEOTIDE SEQUENCE [LARGE SCALE GENOMIC DNA]</scope>
    <source>
        <strain>cv. Nipponbare</strain>
    </source>
</reference>
<reference key="3">
    <citation type="journal article" date="2008" name="Nucleic Acids Res.">
        <title>The rice annotation project database (RAP-DB): 2008 update.</title>
        <authorList>
            <consortium name="The rice annotation project (RAP)"/>
        </authorList>
    </citation>
    <scope>GENOME REANNOTATION</scope>
    <source>
        <strain>cv. Nipponbare</strain>
    </source>
</reference>
<reference key="4">
    <citation type="journal article" date="2013" name="Rice">
        <title>Improvement of the Oryza sativa Nipponbare reference genome using next generation sequence and optical map data.</title>
        <authorList>
            <person name="Kawahara Y."/>
            <person name="de la Bastide M."/>
            <person name="Hamilton J.P."/>
            <person name="Kanamori H."/>
            <person name="McCombie W.R."/>
            <person name="Ouyang S."/>
            <person name="Schwartz D.C."/>
            <person name="Tanaka T."/>
            <person name="Wu J."/>
            <person name="Zhou S."/>
            <person name="Childs K.L."/>
            <person name="Davidson R.M."/>
            <person name="Lin H."/>
            <person name="Quesada-Ocampo L."/>
            <person name="Vaillancourt B."/>
            <person name="Sakai H."/>
            <person name="Lee S.S."/>
            <person name="Kim J."/>
            <person name="Numa H."/>
            <person name="Itoh T."/>
            <person name="Buell C.R."/>
            <person name="Matsumoto T."/>
        </authorList>
    </citation>
    <scope>GENOME REANNOTATION</scope>
    <source>
        <strain>cv. Nipponbare</strain>
    </source>
</reference>
<reference key="5">
    <citation type="journal article" date="2017" name="Plant Sci.">
        <title>Functional characterization of rice CW-domain containing zinc finger proteins involved in histone recognition.</title>
        <authorList>
            <person name="Zhang Z."/>
            <person name="Zhang F."/>
            <person name="Cheng Z.J."/>
            <person name="Liu L.L."/>
            <person name="Lin Q.B."/>
            <person name="Wu F.Q."/>
            <person name="Zhang H."/>
            <person name="Wang J.L."/>
            <person name="Wang J."/>
            <person name="Guo X.P."/>
            <person name="Zhang X."/>
            <person name="Lei C.L."/>
            <person name="Zhao Z.C."/>
            <person name="Zhu S.S."/>
            <person name="Wan J.M."/>
        </authorList>
    </citation>
    <scope>FUNCTION</scope>
    <scope>SUBCELLULAR LOCATION</scope>
    <scope>TISSUE SPECIFICITY</scope>
    <scope>DOMAIN</scope>
    <scope>MUTAGENESIS OF TRP-27; TRP-36 AND TRP-52</scope>
</reference>
<feature type="chain" id="PRO_0000450711" description="Cysteine-tryptophan domain-containing zinc finger protein 3">
    <location>
        <begin position="1"/>
        <end position="902"/>
    </location>
</feature>
<feature type="zinc finger region" description="CW-type" evidence="2">
    <location>
        <begin position="21"/>
        <end position="74"/>
    </location>
</feature>
<feature type="region of interest" description="Disordered" evidence="3">
    <location>
        <begin position="131"/>
        <end position="233"/>
    </location>
</feature>
<feature type="region of interest" description="Disordered" evidence="3">
    <location>
        <begin position="326"/>
        <end position="345"/>
    </location>
</feature>
<feature type="region of interest" description="Disordered" evidence="3">
    <location>
        <begin position="420"/>
        <end position="480"/>
    </location>
</feature>
<feature type="region of interest" description="Disordered" evidence="3">
    <location>
        <begin position="537"/>
        <end position="651"/>
    </location>
</feature>
<feature type="compositionally biased region" description="Basic and acidic residues" evidence="3">
    <location>
        <begin position="151"/>
        <end position="169"/>
    </location>
</feature>
<feature type="compositionally biased region" description="Basic and acidic residues" evidence="3">
    <location>
        <begin position="193"/>
        <end position="203"/>
    </location>
</feature>
<feature type="compositionally biased region" description="Basic residues" evidence="3">
    <location>
        <begin position="204"/>
        <end position="213"/>
    </location>
</feature>
<feature type="compositionally biased region" description="Basic and acidic residues" evidence="3">
    <location>
        <begin position="214"/>
        <end position="233"/>
    </location>
</feature>
<feature type="compositionally biased region" description="Basic and acidic residues" evidence="3">
    <location>
        <begin position="335"/>
        <end position="345"/>
    </location>
</feature>
<feature type="compositionally biased region" description="Low complexity" evidence="3">
    <location>
        <begin position="421"/>
        <end position="433"/>
    </location>
</feature>
<feature type="compositionally biased region" description="Polar residues" evidence="3">
    <location>
        <begin position="450"/>
        <end position="463"/>
    </location>
</feature>
<feature type="compositionally biased region" description="Polar residues" evidence="3">
    <location>
        <begin position="564"/>
        <end position="588"/>
    </location>
</feature>
<feature type="compositionally biased region" description="Polar residues" evidence="3">
    <location>
        <begin position="599"/>
        <end position="611"/>
    </location>
</feature>
<feature type="compositionally biased region" description="Basic and acidic residues" evidence="3">
    <location>
        <begin position="612"/>
        <end position="625"/>
    </location>
</feature>
<feature type="compositionally biased region" description="Polar residues" evidence="3">
    <location>
        <begin position="634"/>
        <end position="648"/>
    </location>
</feature>
<feature type="binding site" evidence="2">
    <location>
        <position position="30"/>
    </location>
    <ligand>
        <name>Zn(2+)</name>
        <dbReference type="ChEBI" id="CHEBI:29105"/>
    </ligand>
</feature>
<feature type="binding site" evidence="2">
    <location>
        <position position="33"/>
    </location>
    <ligand>
        <name>Zn(2+)</name>
        <dbReference type="ChEBI" id="CHEBI:29105"/>
    </ligand>
</feature>
<feature type="binding site" evidence="2">
    <location>
        <position position="54"/>
    </location>
    <ligand>
        <name>Zn(2+)</name>
        <dbReference type="ChEBI" id="CHEBI:29105"/>
    </ligand>
</feature>
<feature type="binding site" evidence="2">
    <location>
        <position position="66"/>
    </location>
    <ligand>
        <name>Zn(2+)</name>
        <dbReference type="ChEBI" id="CHEBI:29105"/>
    </ligand>
</feature>
<feature type="mutagenesis site" description="Abolishes binding to histone H3K4me1/2/3." evidence="4">
    <original>W</original>
    <variation>A</variation>
    <location>
        <position position="27"/>
    </location>
</feature>
<feature type="mutagenesis site" description="Abolishes binding to histone H3K4me1/2/3." evidence="4">
    <original>W</original>
    <variation>A</variation>
    <location>
        <position position="36"/>
    </location>
</feature>
<feature type="mutagenesis site" description="Abolishes binding to histone H3K4me1/2/3." evidence="4">
    <original>W</original>
    <variation>A</variation>
    <location>
        <position position="52"/>
    </location>
</feature>
<organism>
    <name type="scientific">Oryza sativa subsp. japonica</name>
    <name type="common">Rice</name>
    <dbReference type="NCBI Taxonomy" id="39947"/>
    <lineage>
        <taxon>Eukaryota</taxon>
        <taxon>Viridiplantae</taxon>
        <taxon>Streptophyta</taxon>
        <taxon>Embryophyta</taxon>
        <taxon>Tracheophyta</taxon>
        <taxon>Spermatophyta</taxon>
        <taxon>Magnoliopsida</taxon>
        <taxon>Liliopsida</taxon>
        <taxon>Poales</taxon>
        <taxon>Poaceae</taxon>
        <taxon>BOP clade</taxon>
        <taxon>Oryzoideae</taxon>
        <taxon>Oryzeae</taxon>
        <taxon>Oryzinae</taxon>
        <taxon>Oryza</taxon>
        <taxon>Oryza sativa</taxon>
    </lineage>
</organism>